<gene>
    <name type="primary">RWDD2B</name>
</gene>
<accession>Q5R9U9</accession>
<reference key="1">
    <citation type="submission" date="2004-11" db="EMBL/GenBank/DDBJ databases">
        <authorList>
            <consortium name="The German cDNA consortium"/>
        </authorList>
    </citation>
    <scope>NUCLEOTIDE SEQUENCE [LARGE SCALE MRNA]</scope>
    <source>
        <tissue>Kidney</tissue>
    </source>
</reference>
<protein>
    <recommendedName>
        <fullName>RWD domain-containing protein 2B</fullName>
    </recommendedName>
</protein>
<dbReference type="EMBL" id="CR859283">
    <property type="protein sequence ID" value="CAH91461.1"/>
    <property type="molecule type" value="mRNA"/>
</dbReference>
<dbReference type="RefSeq" id="NP_001127422.1">
    <property type="nucleotide sequence ID" value="NM_001133950.1"/>
</dbReference>
<dbReference type="SMR" id="Q5R9U9"/>
<dbReference type="FunCoup" id="Q5R9U9">
    <property type="interactions" value="27"/>
</dbReference>
<dbReference type="STRING" id="9601.ENSPPYP00000012639"/>
<dbReference type="GeneID" id="100174492"/>
<dbReference type="KEGG" id="pon:100174492"/>
<dbReference type="CTD" id="10069"/>
<dbReference type="eggNOG" id="ENOG502QR2G">
    <property type="taxonomic scope" value="Eukaryota"/>
</dbReference>
<dbReference type="InParanoid" id="Q5R9U9"/>
<dbReference type="OrthoDB" id="432412at2759"/>
<dbReference type="Proteomes" id="UP000001595">
    <property type="component" value="Unplaced"/>
</dbReference>
<dbReference type="CDD" id="cd23829">
    <property type="entry name" value="RWD_RWDD2"/>
    <property type="match status" value="1"/>
</dbReference>
<dbReference type="CDD" id="cd24163">
    <property type="entry name" value="RWDD2_C"/>
    <property type="match status" value="1"/>
</dbReference>
<dbReference type="Gene3D" id="3.10.110.10">
    <property type="entry name" value="Ubiquitin Conjugating Enzyme"/>
    <property type="match status" value="1"/>
</dbReference>
<dbReference type="InterPro" id="IPR017359">
    <property type="entry name" value="Phi-like"/>
</dbReference>
<dbReference type="InterPro" id="IPR010541">
    <property type="entry name" value="Prp3_C"/>
</dbReference>
<dbReference type="InterPro" id="IPR006575">
    <property type="entry name" value="RWD_dom"/>
</dbReference>
<dbReference type="InterPro" id="IPR016135">
    <property type="entry name" value="UBQ-conjugating_enzyme/RWD"/>
</dbReference>
<dbReference type="PANTHER" id="PTHR15955">
    <property type="entry name" value="RWD DOMAIN CONTAINING PROTEIN 2"/>
    <property type="match status" value="1"/>
</dbReference>
<dbReference type="PANTHER" id="PTHR15955:SF8">
    <property type="entry name" value="RWD DOMAIN-CONTAINING PROTEIN 2B-RELATED"/>
    <property type="match status" value="1"/>
</dbReference>
<dbReference type="Pfam" id="PF06544">
    <property type="entry name" value="Prp3_C"/>
    <property type="match status" value="1"/>
</dbReference>
<dbReference type="Pfam" id="PF05773">
    <property type="entry name" value="RWD"/>
    <property type="match status" value="1"/>
</dbReference>
<dbReference type="PIRSF" id="PIRSF038021">
    <property type="entry name" value="UCP038021_RWDD2"/>
    <property type="match status" value="1"/>
</dbReference>
<dbReference type="SMART" id="SM00591">
    <property type="entry name" value="RWD"/>
    <property type="match status" value="1"/>
</dbReference>
<dbReference type="SUPFAM" id="SSF54495">
    <property type="entry name" value="UBC-like"/>
    <property type="match status" value="1"/>
</dbReference>
<dbReference type="PROSITE" id="PS50908">
    <property type="entry name" value="RWD"/>
    <property type="match status" value="1"/>
</dbReference>
<feature type="chain" id="PRO_0000079506" description="RWD domain-containing protein 2B">
    <location>
        <begin position="1"/>
        <end position="319"/>
    </location>
</feature>
<feature type="domain" description="RWD" evidence="2">
    <location>
        <begin position="41"/>
        <end position="165"/>
    </location>
</feature>
<feature type="modified residue" description="Phosphoserine" evidence="1">
    <location>
        <position position="275"/>
    </location>
</feature>
<keyword id="KW-0597">Phosphoprotein</keyword>
<keyword id="KW-1185">Reference proteome</keyword>
<sequence length="319" mass="36340">MKIELSVQPWDPGYSSEGATAQETYTCPKMIEIEQAEAQLSELDLLASMFPGENELIVNDQLAVAELKDCIEKKTMEGRSSKVYFTINMNLDVSEEKMAMFSLACILPFKYPAVLPEITVRSALLSRSQQTQLNTDLTAFLQKHCHGDVCILNATEWVREHASGYVSRDTSSSPTTGNTVQSVDLIFTRLWIYSHHIYNKCKRKNILEWAKELSLSGFSMPGKPGVVCVEGPQSACEEFWSRLRKLNWKRILIRHQEDIPFDGTNDEMERQRKFSIFEEKVFIVNGARGNHMDFGQLYQFLNTKGCGDVFQMFFGVEGQ</sequence>
<evidence type="ECO:0000250" key="1">
    <source>
        <dbReference type="UniProtKB" id="P57060"/>
    </source>
</evidence>
<evidence type="ECO:0000255" key="2">
    <source>
        <dbReference type="PROSITE-ProRule" id="PRU00179"/>
    </source>
</evidence>
<proteinExistence type="evidence at transcript level"/>
<name>RWD2B_PONAB</name>
<organism>
    <name type="scientific">Pongo abelii</name>
    <name type="common">Sumatran orangutan</name>
    <name type="synonym">Pongo pygmaeus abelii</name>
    <dbReference type="NCBI Taxonomy" id="9601"/>
    <lineage>
        <taxon>Eukaryota</taxon>
        <taxon>Metazoa</taxon>
        <taxon>Chordata</taxon>
        <taxon>Craniata</taxon>
        <taxon>Vertebrata</taxon>
        <taxon>Euteleostomi</taxon>
        <taxon>Mammalia</taxon>
        <taxon>Eutheria</taxon>
        <taxon>Euarchontoglires</taxon>
        <taxon>Primates</taxon>
        <taxon>Haplorrhini</taxon>
        <taxon>Catarrhini</taxon>
        <taxon>Hominidae</taxon>
        <taxon>Pongo</taxon>
    </lineage>
</organism>